<comment type="function">
    <text evidence="1">The RuvA-RuvB-RuvC complex processes Holliday junction (HJ) DNA during genetic recombination and DNA repair. Endonuclease that resolves HJ intermediates. Cleaves cruciform DNA by making single-stranded nicks across the HJ at symmetrical positions within the homologous arms, yielding a 5'-phosphate and a 3'-hydroxyl group; requires a central core of homology in the junction. The consensus cleavage sequence is 5'-(A/T)TT(C/G)-3'. Cleavage occurs on the 3'-side of the TT dinucleotide at the point of strand exchange. HJ branch migration catalyzed by RuvA-RuvB allows RuvC to scan DNA until it finds its consensus sequence, where it cleaves and resolves the cruciform DNA.</text>
</comment>
<comment type="catalytic activity">
    <reaction evidence="1">
        <text>Endonucleolytic cleavage at a junction such as a reciprocal single-stranded crossover between two homologous DNA duplexes (Holliday junction).</text>
        <dbReference type="EC" id="3.1.21.10"/>
    </reaction>
</comment>
<comment type="cofactor">
    <cofactor evidence="1">
        <name>Mg(2+)</name>
        <dbReference type="ChEBI" id="CHEBI:18420"/>
    </cofactor>
    <text evidence="1">Binds 2 Mg(2+) ion per subunit.</text>
</comment>
<comment type="subunit">
    <text evidence="1">Homodimer which binds Holliday junction (HJ) DNA. The HJ becomes 2-fold symmetrical on binding to RuvC with unstacked arms; it has a different conformation from HJ DNA in complex with RuvA. In the full resolvosome a probable DNA-RuvA(4)-RuvB(12)-RuvC(2) complex forms which resolves the HJ.</text>
</comment>
<comment type="subcellular location">
    <subcellularLocation>
        <location evidence="1">Cytoplasm</location>
    </subcellularLocation>
</comment>
<comment type="similarity">
    <text evidence="1">Belongs to the RuvC family.</text>
</comment>
<comment type="sequence caution" evidence="2">
    <conflict type="erroneous initiation">
        <sequence resource="EMBL-CDS" id="CAM80733"/>
    </conflict>
    <text>Extended N-terminus.</text>
</comment>
<evidence type="ECO:0000255" key="1">
    <source>
        <dbReference type="HAMAP-Rule" id="MF_00034"/>
    </source>
</evidence>
<evidence type="ECO:0000305" key="2"/>
<protein>
    <recommendedName>
        <fullName evidence="1">Crossover junction endodeoxyribonuclease RuvC</fullName>
        <ecNumber evidence="1">3.1.21.10</ecNumber>
    </recommendedName>
    <alternativeName>
        <fullName evidence="1">Holliday junction nuclease RuvC</fullName>
    </alternativeName>
    <alternativeName>
        <fullName evidence="1">Holliday junction resolvase RuvC</fullName>
    </alternativeName>
</protein>
<dbReference type="EC" id="3.1.21.10" evidence="1"/>
<dbReference type="EMBL" id="AM494475">
    <property type="protein sequence ID" value="CAM80733.1"/>
    <property type="status" value="ALT_INIT"/>
    <property type="molecule type" value="Genomic_DNA"/>
</dbReference>
<dbReference type="RefSeq" id="WP_041621530.1">
    <property type="nucleotide sequence ID" value="NC_009488.1"/>
</dbReference>
<dbReference type="SMR" id="A5CES8"/>
<dbReference type="KEGG" id="ots:OTBS_1638"/>
<dbReference type="eggNOG" id="COG0817">
    <property type="taxonomic scope" value="Bacteria"/>
</dbReference>
<dbReference type="HOGENOM" id="CLU_091257_1_0_5"/>
<dbReference type="Proteomes" id="UP000001565">
    <property type="component" value="Chromosome"/>
</dbReference>
<dbReference type="GO" id="GO:0005737">
    <property type="term" value="C:cytoplasm"/>
    <property type="evidence" value="ECO:0007669"/>
    <property type="project" value="UniProtKB-SubCell"/>
</dbReference>
<dbReference type="GO" id="GO:0048476">
    <property type="term" value="C:Holliday junction resolvase complex"/>
    <property type="evidence" value="ECO:0007669"/>
    <property type="project" value="UniProtKB-UniRule"/>
</dbReference>
<dbReference type="GO" id="GO:0008821">
    <property type="term" value="F:crossover junction DNA endonuclease activity"/>
    <property type="evidence" value="ECO:0007669"/>
    <property type="project" value="UniProtKB-UniRule"/>
</dbReference>
<dbReference type="GO" id="GO:0003677">
    <property type="term" value="F:DNA binding"/>
    <property type="evidence" value="ECO:0007669"/>
    <property type="project" value="UniProtKB-KW"/>
</dbReference>
<dbReference type="GO" id="GO:0000287">
    <property type="term" value="F:magnesium ion binding"/>
    <property type="evidence" value="ECO:0007669"/>
    <property type="project" value="UniProtKB-UniRule"/>
</dbReference>
<dbReference type="GO" id="GO:0006310">
    <property type="term" value="P:DNA recombination"/>
    <property type="evidence" value="ECO:0007669"/>
    <property type="project" value="UniProtKB-UniRule"/>
</dbReference>
<dbReference type="GO" id="GO:0006281">
    <property type="term" value="P:DNA repair"/>
    <property type="evidence" value="ECO:0007669"/>
    <property type="project" value="UniProtKB-UniRule"/>
</dbReference>
<dbReference type="CDD" id="cd16962">
    <property type="entry name" value="RuvC"/>
    <property type="match status" value="1"/>
</dbReference>
<dbReference type="FunFam" id="3.30.420.10:FF:000002">
    <property type="entry name" value="Crossover junction endodeoxyribonuclease RuvC"/>
    <property type="match status" value="1"/>
</dbReference>
<dbReference type="Gene3D" id="3.30.420.10">
    <property type="entry name" value="Ribonuclease H-like superfamily/Ribonuclease H"/>
    <property type="match status" value="1"/>
</dbReference>
<dbReference type="HAMAP" id="MF_00034">
    <property type="entry name" value="RuvC"/>
    <property type="match status" value="1"/>
</dbReference>
<dbReference type="InterPro" id="IPR012337">
    <property type="entry name" value="RNaseH-like_sf"/>
</dbReference>
<dbReference type="InterPro" id="IPR036397">
    <property type="entry name" value="RNaseH_sf"/>
</dbReference>
<dbReference type="InterPro" id="IPR002176">
    <property type="entry name" value="X-over_junc_endoDNase_RuvC"/>
</dbReference>
<dbReference type="NCBIfam" id="TIGR00228">
    <property type="entry name" value="ruvC"/>
    <property type="match status" value="1"/>
</dbReference>
<dbReference type="PANTHER" id="PTHR30194">
    <property type="entry name" value="CROSSOVER JUNCTION ENDODEOXYRIBONUCLEASE RUVC"/>
    <property type="match status" value="1"/>
</dbReference>
<dbReference type="PANTHER" id="PTHR30194:SF3">
    <property type="entry name" value="CROSSOVER JUNCTION ENDODEOXYRIBONUCLEASE RUVC"/>
    <property type="match status" value="1"/>
</dbReference>
<dbReference type="Pfam" id="PF02075">
    <property type="entry name" value="RuvC"/>
    <property type="match status" value="1"/>
</dbReference>
<dbReference type="PRINTS" id="PR00696">
    <property type="entry name" value="RSOLVASERUVC"/>
</dbReference>
<dbReference type="SUPFAM" id="SSF53098">
    <property type="entry name" value="Ribonuclease H-like"/>
    <property type="match status" value="1"/>
</dbReference>
<name>RUVC_ORITB</name>
<gene>
    <name evidence="1" type="primary">ruvC</name>
    <name type="ordered locus">OTBS_1638</name>
</gene>
<accession>A5CES8</accession>
<feature type="chain" id="PRO_0000332435" description="Crossover junction endodeoxyribonuclease RuvC">
    <location>
        <begin position="1"/>
        <end position="159"/>
    </location>
</feature>
<feature type="active site" evidence="1">
    <location>
        <position position="7"/>
    </location>
</feature>
<feature type="active site" evidence="1">
    <location>
        <position position="67"/>
    </location>
</feature>
<feature type="active site" evidence="1">
    <location>
        <position position="139"/>
    </location>
</feature>
<feature type="binding site" evidence="1">
    <location>
        <position position="7"/>
    </location>
    <ligand>
        <name>Mg(2+)</name>
        <dbReference type="ChEBI" id="CHEBI:18420"/>
        <label>1</label>
    </ligand>
</feature>
<feature type="binding site" evidence="1">
    <location>
        <position position="67"/>
    </location>
    <ligand>
        <name>Mg(2+)</name>
        <dbReference type="ChEBI" id="CHEBI:18420"/>
        <label>2</label>
    </ligand>
</feature>
<feature type="binding site" evidence="1">
    <location>
        <position position="139"/>
    </location>
    <ligand>
        <name>Mg(2+)</name>
        <dbReference type="ChEBI" id="CHEBI:18420"/>
        <label>1</label>
    </ligand>
</feature>
<organism>
    <name type="scientific">Orientia tsutsugamushi (strain Boryong)</name>
    <name type="common">Rickettsia tsutsugamushi</name>
    <dbReference type="NCBI Taxonomy" id="357244"/>
    <lineage>
        <taxon>Bacteria</taxon>
        <taxon>Pseudomonadati</taxon>
        <taxon>Pseudomonadota</taxon>
        <taxon>Alphaproteobacteria</taxon>
        <taxon>Rickettsiales</taxon>
        <taxon>Rickettsiaceae</taxon>
        <taxon>Rickettsieae</taxon>
        <taxon>Orientia</taxon>
    </lineage>
</organism>
<keyword id="KW-0963">Cytoplasm</keyword>
<keyword id="KW-0227">DNA damage</keyword>
<keyword id="KW-0233">DNA recombination</keyword>
<keyword id="KW-0234">DNA repair</keyword>
<keyword id="KW-0238">DNA-binding</keyword>
<keyword id="KW-0255">Endonuclease</keyword>
<keyword id="KW-0378">Hydrolase</keyword>
<keyword id="KW-0460">Magnesium</keyword>
<keyword id="KW-0479">Metal-binding</keyword>
<keyword id="KW-0540">Nuclease</keyword>
<keyword id="KW-1185">Reference proteome</keyword>
<reference key="1">
    <citation type="journal article" date="2007" name="Proc. Natl. Acad. Sci. U.S.A.">
        <title>The Orientia tsutsugamushi genome reveals massive proliferation of conjugative type IV secretion system and host-cell interaction genes.</title>
        <authorList>
            <person name="Cho N.-H."/>
            <person name="Kim H.-R."/>
            <person name="Lee J.-H."/>
            <person name="Kim S.-Y."/>
            <person name="Kim J."/>
            <person name="Cha S."/>
            <person name="Kim S.-Y."/>
            <person name="Darby A.C."/>
            <person name="Fuxelius H.-H."/>
            <person name="Yin J."/>
            <person name="Kim J.H."/>
            <person name="Kim J."/>
            <person name="Lee S.J."/>
            <person name="Koh Y.-S."/>
            <person name="Jang W.-J."/>
            <person name="Park K.-H."/>
            <person name="Andersson S.G.E."/>
            <person name="Choi M.-S."/>
            <person name="Kim I.-S."/>
        </authorList>
    </citation>
    <scope>NUCLEOTIDE SEQUENCE [LARGE SCALE GENOMIC DNA]</scope>
    <source>
        <strain>Boryong</strain>
    </source>
</reference>
<sequence length="159" mass="17459">MIILGIDPSLVSTGWGVISISDSMVNYIDSGVIKTVSKDSLVLKLGNISLMIEKLITRFNPFHVAMEEVFINKNYSSSVTLIQARGAIMSVIGRYNIDFSEYAPNKIKKAIVGAGKAEKHQVQQMVKLLMHIKKAISKDESDALATAYTASVNQQIKII</sequence>
<proteinExistence type="inferred from homology"/>